<proteinExistence type="inferred from homology"/>
<name>RL6_STRE4</name>
<sequence length="178" mass="19471">MSRIGNKVIIIPAGVEIINNDNVVTVKGPKGELTREFNKNIEIKVEGNEMTLVRPDDSKEMKTIHGTTRANLNNMVVGVSEGFKKELEMKGVGYRAQLQGSKLVLSVGKSHQDEVEAPEGITFTVANPTSISVEGINKEVVGQTAAYIRSLRSPEPYKGKGIRYVGEYVRLKEGKTGK</sequence>
<keyword id="KW-0687">Ribonucleoprotein</keyword>
<keyword id="KW-0689">Ribosomal protein</keyword>
<keyword id="KW-0694">RNA-binding</keyword>
<keyword id="KW-0699">rRNA-binding</keyword>
<accession>C0MAG5</accession>
<organism>
    <name type="scientific">Streptococcus equi subsp. equi (strain 4047)</name>
    <dbReference type="NCBI Taxonomy" id="553482"/>
    <lineage>
        <taxon>Bacteria</taxon>
        <taxon>Bacillati</taxon>
        <taxon>Bacillota</taxon>
        <taxon>Bacilli</taxon>
        <taxon>Lactobacillales</taxon>
        <taxon>Streptococcaceae</taxon>
        <taxon>Streptococcus</taxon>
    </lineage>
</organism>
<dbReference type="EMBL" id="FM204883">
    <property type="protein sequence ID" value="CAW91995.1"/>
    <property type="molecule type" value="Genomic_DNA"/>
</dbReference>
<dbReference type="RefSeq" id="WP_012514744.1">
    <property type="nucleotide sequence ID" value="NC_012471.1"/>
</dbReference>
<dbReference type="SMR" id="C0MAG5"/>
<dbReference type="GeneID" id="83703919"/>
<dbReference type="KEGG" id="seu:SEQ_0070"/>
<dbReference type="HOGENOM" id="CLU_065464_1_2_9"/>
<dbReference type="OrthoDB" id="9805007at2"/>
<dbReference type="Proteomes" id="UP000001365">
    <property type="component" value="Chromosome"/>
</dbReference>
<dbReference type="GO" id="GO:0022625">
    <property type="term" value="C:cytosolic large ribosomal subunit"/>
    <property type="evidence" value="ECO:0007669"/>
    <property type="project" value="TreeGrafter"/>
</dbReference>
<dbReference type="GO" id="GO:0019843">
    <property type="term" value="F:rRNA binding"/>
    <property type="evidence" value="ECO:0007669"/>
    <property type="project" value="UniProtKB-UniRule"/>
</dbReference>
<dbReference type="GO" id="GO:0003735">
    <property type="term" value="F:structural constituent of ribosome"/>
    <property type="evidence" value="ECO:0007669"/>
    <property type="project" value="InterPro"/>
</dbReference>
<dbReference type="GO" id="GO:0002181">
    <property type="term" value="P:cytoplasmic translation"/>
    <property type="evidence" value="ECO:0007669"/>
    <property type="project" value="TreeGrafter"/>
</dbReference>
<dbReference type="FunFam" id="3.90.930.12:FF:000001">
    <property type="entry name" value="50S ribosomal protein L6"/>
    <property type="match status" value="1"/>
</dbReference>
<dbReference type="FunFam" id="3.90.930.12:FF:000002">
    <property type="entry name" value="50S ribosomal protein L6"/>
    <property type="match status" value="1"/>
</dbReference>
<dbReference type="Gene3D" id="3.90.930.12">
    <property type="entry name" value="Ribosomal protein L6, alpha-beta domain"/>
    <property type="match status" value="2"/>
</dbReference>
<dbReference type="HAMAP" id="MF_01365_B">
    <property type="entry name" value="Ribosomal_uL6_B"/>
    <property type="match status" value="1"/>
</dbReference>
<dbReference type="InterPro" id="IPR000702">
    <property type="entry name" value="Ribosomal_uL6-like"/>
</dbReference>
<dbReference type="InterPro" id="IPR036789">
    <property type="entry name" value="Ribosomal_uL6-like_a/b-dom_sf"/>
</dbReference>
<dbReference type="InterPro" id="IPR020040">
    <property type="entry name" value="Ribosomal_uL6_a/b-dom"/>
</dbReference>
<dbReference type="InterPro" id="IPR019906">
    <property type="entry name" value="Ribosomal_uL6_bac-type"/>
</dbReference>
<dbReference type="InterPro" id="IPR002358">
    <property type="entry name" value="Ribosomal_uL6_CS"/>
</dbReference>
<dbReference type="NCBIfam" id="TIGR03654">
    <property type="entry name" value="L6_bact"/>
    <property type="match status" value="1"/>
</dbReference>
<dbReference type="PANTHER" id="PTHR11655">
    <property type="entry name" value="60S/50S RIBOSOMAL PROTEIN L6/L9"/>
    <property type="match status" value="1"/>
</dbReference>
<dbReference type="PANTHER" id="PTHR11655:SF14">
    <property type="entry name" value="LARGE RIBOSOMAL SUBUNIT PROTEIN UL6M"/>
    <property type="match status" value="1"/>
</dbReference>
<dbReference type="Pfam" id="PF00347">
    <property type="entry name" value="Ribosomal_L6"/>
    <property type="match status" value="2"/>
</dbReference>
<dbReference type="PIRSF" id="PIRSF002162">
    <property type="entry name" value="Ribosomal_L6"/>
    <property type="match status" value="1"/>
</dbReference>
<dbReference type="PRINTS" id="PR00059">
    <property type="entry name" value="RIBOSOMALL6"/>
</dbReference>
<dbReference type="SUPFAM" id="SSF56053">
    <property type="entry name" value="Ribosomal protein L6"/>
    <property type="match status" value="2"/>
</dbReference>
<dbReference type="PROSITE" id="PS00525">
    <property type="entry name" value="RIBOSOMAL_L6_1"/>
    <property type="match status" value="1"/>
</dbReference>
<reference key="1">
    <citation type="journal article" date="2009" name="PLoS Pathog.">
        <title>Genomic evidence for the evolution of Streptococcus equi: host restriction, increased virulence, and genetic exchange with human pathogens.</title>
        <authorList>
            <person name="Holden M.T.G."/>
            <person name="Heather Z."/>
            <person name="Paillot R."/>
            <person name="Steward K.F."/>
            <person name="Webb K."/>
            <person name="Ainslie F."/>
            <person name="Jourdan T."/>
            <person name="Bason N.C."/>
            <person name="Holroyd N.E."/>
            <person name="Mungall K."/>
            <person name="Quail M.A."/>
            <person name="Sanders M."/>
            <person name="Simmonds M."/>
            <person name="Willey D."/>
            <person name="Brooks K."/>
            <person name="Aanensen D.M."/>
            <person name="Spratt B.G."/>
            <person name="Jolley K.A."/>
            <person name="Maiden M.C.J."/>
            <person name="Kehoe M."/>
            <person name="Chanter N."/>
            <person name="Bentley S.D."/>
            <person name="Robinson C."/>
            <person name="Maskell D.J."/>
            <person name="Parkhill J."/>
            <person name="Waller A.S."/>
        </authorList>
    </citation>
    <scope>NUCLEOTIDE SEQUENCE [LARGE SCALE GENOMIC DNA]</scope>
    <source>
        <strain>4047</strain>
    </source>
</reference>
<gene>
    <name evidence="1" type="primary">rplF</name>
    <name type="ordered locus">SEQ_0070</name>
</gene>
<evidence type="ECO:0000255" key="1">
    <source>
        <dbReference type="HAMAP-Rule" id="MF_01365"/>
    </source>
</evidence>
<evidence type="ECO:0000305" key="2"/>
<protein>
    <recommendedName>
        <fullName evidence="1">Large ribosomal subunit protein uL6</fullName>
    </recommendedName>
    <alternativeName>
        <fullName evidence="2">50S ribosomal protein L6</fullName>
    </alternativeName>
</protein>
<feature type="chain" id="PRO_1000166830" description="Large ribosomal subunit protein uL6">
    <location>
        <begin position="1"/>
        <end position="178"/>
    </location>
</feature>
<comment type="function">
    <text evidence="1">This protein binds to the 23S rRNA, and is important in its secondary structure. It is located near the subunit interface in the base of the L7/L12 stalk, and near the tRNA binding site of the peptidyltransferase center.</text>
</comment>
<comment type="subunit">
    <text evidence="1">Part of the 50S ribosomal subunit.</text>
</comment>
<comment type="similarity">
    <text evidence="1">Belongs to the universal ribosomal protein uL6 family.</text>
</comment>